<organism>
    <name type="scientific">Spermophilus atricapillus</name>
    <name type="common">Baja California rock squirrel</name>
    <dbReference type="NCBI Taxonomy" id="99833"/>
    <lineage>
        <taxon>Eukaryota</taxon>
        <taxon>Metazoa</taxon>
        <taxon>Chordata</taxon>
        <taxon>Craniata</taxon>
        <taxon>Vertebrata</taxon>
        <taxon>Euteleostomi</taxon>
        <taxon>Mammalia</taxon>
        <taxon>Eutheria</taxon>
        <taxon>Euarchontoglires</taxon>
        <taxon>Glires</taxon>
        <taxon>Rodentia</taxon>
        <taxon>Sciuromorpha</taxon>
        <taxon>Sciuridae</taxon>
        <taxon>Xerinae</taxon>
        <taxon>Marmotini</taxon>
        <taxon>Otospermophilus</taxon>
    </lineage>
</organism>
<dbReference type="EMBL" id="AF157944">
    <property type="protein sequence ID" value="AAD50228.1"/>
    <property type="molecule type" value="Genomic_DNA"/>
</dbReference>
<dbReference type="SMR" id="Q9TF14"/>
<dbReference type="GO" id="GO:0005743">
    <property type="term" value="C:mitochondrial inner membrane"/>
    <property type="evidence" value="ECO:0007669"/>
    <property type="project" value="UniProtKB-SubCell"/>
</dbReference>
<dbReference type="GO" id="GO:0045275">
    <property type="term" value="C:respiratory chain complex III"/>
    <property type="evidence" value="ECO:0007669"/>
    <property type="project" value="InterPro"/>
</dbReference>
<dbReference type="GO" id="GO:0046872">
    <property type="term" value="F:metal ion binding"/>
    <property type="evidence" value="ECO:0007669"/>
    <property type="project" value="UniProtKB-KW"/>
</dbReference>
<dbReference type="GO" id="GO:0008121">
    <property type="term" value="F:ubiquinol-cytochrome-c reductase activity"/>
    <property type="evidence" value="ECO:0007669"/>
    <property type="project" value="InterPro"/>
</dbReference>
<dbReference type="GO" id="GO:0006122">
    <property type="term" value="P:mitochondrial electron transport, ubiquinol to cytochrome c"/>
    <property type="evidence" value="ECO:0007669"/>
    <property type="project" value="TreeGrafter"/>
</dbReference>
<dbReference type="CDD" id="cd00290">
    <property type="entry name" value="cytochrome_b_C"/>
    <property type="match status" value="1"/>
</dbReference>
<dbReference type="CDD" id="cd00284">
    <property type="entry name" value="Cytochrome_b_N"/>
    <property type="match status" value="1"/>
</dbReference>
<dbReference type="FunFam" id="1.20.810.10:FF:000002">
    <property type="entry name" value="Cytochrome b"/>
    <property type="match status" value="1"/>
</dbReference>
<dbReference type="Gene3D" id="1.20.810.10">
    <property type="entry name" value="Cytochrome Bc1 Complex, Chain C"/>
    <property type="match status" value="1"/>
</dbReference>
<dbReference type="InterPro" id="IPR005798">
    <property type="entry name" value="Cyt_b/b6_C"/>
</dbReference>
<dbReference type="InterPro" id="IPR036150">
    <property type="entry name" value="Cyt_b/b6_C_sf"/>
</dbReference>
<dbReference type="InterPro" id="IPR005797">
    <property type="entry name" value="Cyt_b/b6_N"/>
</dbReference>
<dbReference type="InterPro" id="IPR027387">
    <property type="entry name" value="Cytb/b6-like_sf"/>
</dbReference>
<dbReference type="InterPro" id="IPR030689">
    <property type="entry name" value="Cytochrome_b"/>
</dbReference>
<dbReference type="InterPro" id="IPR048260">
    <property type="entry name" value="Cytochrome_b_C_euk/bac"/>
</dbReference>
<dbReference type="InterPro" id="IPR048259">
    <property type="entry name" value="Cytochrome_b_N_euk/bac"/>
</dbReference>
<dbReference type="InterPro" id="IPR016174">
    <property type="entry name" value="Di-haem_cyt_TM"/>
</dbReference>
<dbReference type="PANTHER" id="PTHR19271">
    <property type="entry name" value="CYTOCHROME B"/>
    <property type="match status" value="1"/>
</dbReference>
<dbReference type="PANTHER" id="PTHR19271:SF16">
    <property type="entry name" value="CYTOCHROME B"/>
    <property type="match status" value="1"/>
</dbReference>
<dbReference type="Pfam" id="PF00032">
    <property type="entry name" value="Cytochrom_B_C"/>
    <property type="match status" value="1"/>
</dbReference>
<dbReference type="Pfam" id="PF00033">
    <property type="entry name" value="Cytochrome_B"/>
    <property type="match status" value="1"/>
</dbReference>
<dbReference type="PIRSF" id="PIRSF038885">
    <property type="entry name" value="COB"/>
    <property type="match status" value="1"/>
</dbReference>
<dbReference type="SUPFAM" id="SSF81648">
    <property type="entry name" value="a domain/subunit of cytochrome bc1 complex (Ubiquinol-cytochrome c reductase)"/>
    <property type="match status" value="1"/>
</dbReference>
<dbReference type="SUPFAM" id="SSF81342">
    <property type="entry name" value="Transmembrane di-heme cytochromes"/>
    <property type="match status" value="1"/>
</dbReference>
<dbReference type="PROSITE" id="PS51003">
    <property type="entry name" value="CYTB_CTER"/>
    <property type="match status" value="1"/>
</dbReference>
<dbReference type="PROSITE" id="PS51002">
    <property type="entry name" value="CYTB_NTER"/>
    <property type="match status" value="1"/>
</dbReference>
<comment type="function">
    <text evidence="2">Component of the ubiquinol-cytochrome c reductase complex (complex III or cytochrome b-c1 complex) that is part of the mitochondrial respiratory chain. The b-c1 complex mediates electron transfer from ubiquinol to cytochrome c. Contributes to the generation of a proton gradient across the mitochondrial membrane that is then used for ATP synthesis.</text>
</comment>
<comment type="cofactor">
    <cofactor evidence="2">
        <name>heme b</name>
        <dbReference type="ChEBI" id="CHEBI:60344"/>
    </cofactor>
    <text evidence="2">Binds 2 heme b groups non-covalently.</text>
</comment>
<comment type="subunit">
    <text evidence="2">The cytochrome bc1 complex contains 11 subunits: 3 respiratory subunits (MT-CYB, CYC1 and UQCRFS1), 2 core proteins (UQCRC1 and UQCRC2) and 6 low-molecular weight proteins (UQCRH/QCR6, UQCRB/QCR7, UQCRQ/QCR8, UQCR10/QCR9, UQCR11/QCR10 and a cleavage product of UQCRFS1). This cytochrome bc1 complex then forms a dimer.</text>
</comment>
<comment type="subcellular location">
    <subcellularLocation>
        <location evidence="2">Mitochondrion inner membrane</location>
        <topology evidence="2">Multi-pass membrane protein</topology>
    </subcellularLocation>
</comment>
<comment type="miscellaneous">
    <text evidence="1">Heme 1 (or BL or b562) is low-potential and absorbs at about 562 nm, and heme 2 (or BH or b566) is high-potential and absorbs at about 566 nm.</text>
</comment>
<comment type="similarity">
    <text evidence="3 4">Belongs to the cytochrome b family.</text>
</comment>
<comment type="caution">
    <text evidence="2">The full-length protein contains only eight transmembrane helices, not nine as predicted by bioinformatics tools.</text>
</comment>
<reference key="1">
    <citation type="submission" date="1999-06" db="EMBL/GenBank/DDBJ databases">
        <title>A molecular phylogeny of ground squirrels and prairie dogs.</title>
        <authorList>
            <person name="Harrison R.G."/>
            <person name="Sherman P.W."/>
            <person name="Yensen E."/>
            <person name="Hoffmann R.S."/>
            <person name="Bogdanowicz S.M."/>
        </authorList>
    </citation>
    <scope>NUCLEOTIDE SEQUENCE [GENOMIC DNA]</scope>
    <source>
        <strain>Isolate S95</strain>
    </source>
</reference>
<evidence type="ECO:0000250" key="1"/>
<evidence type="ECO:0000250" key="2">
    <source>
        <dbReference type="UniProtKB" id="P00157"/>
    </source>
</evidence>
<evidence type="ECO:0000255" key="3">
    <source>
        <dbReference type="PROSITE-ProRule" id="PRU00967"/>
    </source>
</evidence>
<evidence type="ECO:0000255" key="4">
    <source>
        <dbReference type="PROSITE-ProRule" id="PRU00968"/>
    </source>
</evidence>
<proteinExistence type="inferred from homology"/>
<name>CYB_SPEAI</name>
<feature type="chain" id="PRO_0000061589" description="Cytochrome b">
    <location>
        <begin position="1"/>
        <end position="379"/>
    </location>
</feature>
<feature type="transmembrane region" description="Helical" evidence="2">
    <location>
        <begin position="33"/>
        <end position="53"/>
    </location>
</feature>
<feature type="transmembrane region" description="Helical" evidence="2">
    <location>
        <begin position="77"/>
        <end position="98"/>
    </location>
</feature>
<feature type="transmembrane region" description="Helical" evidence="2">
    <location>
        <begin position="113"/>
        <end position="133"/>
    </location>
</feature>
<feature type="transmembrane region" description="Helical" evidence="2">
    <location>
        <begin position="178"/>
        <end position="198"/>
    </location>
</feature>
<feature type="transmembrane region" description="Helical" evidence="2">
    <location>
        <begin position="226"/>
        <end position="246"/>
    </location>
</feature>
<feature type="transmembrane region" description="Helical" evidence="2">
    <location>
        <begin position="288"/>
        <end position="308"/>
    </location>
</feature>
<feature type="transmembrane region" description="Helical" evidence="2">
    <location>
        <begin position="320"/>
        <end position="340"/>
    </location>
</feature>
<feature type="transmembrane region" description="Helical" evidence="2">
    <location>
        <begin position="347"/>
        <end position="367"/>
    </location>
</feature>
<feature type="binding site" description="axial binding residue" evidence="2">
    <location>
        <position position="83"/>
    </location>
    <ligand>
        <name>heme b</name>
        <dbReference type="ChEBI" id="CHEBI:60344"/>
        <label>b562</label>
    </ligand>
    <ligandPart>
        <name>Fe</name>
        <dbReference type="ChEBI" id="CHEBI:18248"/>
    </ligandPart>
</feature>
<feature type="binding site" description="axial binding residue" evidence="2">
    <location>
        <position position="97"/>
    </location>
    <ligand>
        <name>heme b</name>
        <dbReference type="ChEBI" id="CHEBI:60344"/>
        <label>b566</label>
    </ligand>
    <ligandPart>
        <name>Fe</name>
        <dbReference type="ChEBI" id="CHEBI:18248"/>
    </ligandPart>
</feature>
<feature type="binding site" description="axial binding residue" evidence="2">
    <location>
        <position position="182"/>
    </location>
    <ligand>
        <name>heme b</name>
        <dbReference type="ChEBI" id="CHEBI:60344"/>
        <label>b562</label>
    </ligand>
    <ligandPart>
        <name>Fe</name>
        <dbReference type="ChEBI" id="CHEBI:18248"/>
    </ligandPart>
</feature>
<feature type="binding site" description="axial binding residue" evidence="2">
    <location>
        <position position="196"/>
    </location>
    <ligand>
        <name>heme b</name>
        <dbReference type="ChEBI" id="CHEBI:60344"/>
        <label>b566</label>
    </ligand>
    <ligandPart>
        <name>Fe</name>
        <dbReference type="ChEBI" id="CHEBI:18248"/>
    </ligandPart>
</feature>
<feature type="binding site" evidence="2">
    <location>
        <position position="201"/>
    </location>
    <ligand>
        <name>a ubiquinone</name>
        <dbReference type="ChEBI" id="CHEBI:16389"/>
    </ligand>
</feature>
<geneLocation type="mitochondrion"/>
<sequence>MTNIRKTHPLMKIVNHSFIDLPTPSNISTWWNFGSLLGLCLTVQILTGLFLAMHYTPDTMTAFSSVTHICRDVNFGWLIRYIHANGASMFFICLFLHVGRGLYYGSYTYFETWNVGIILLFVVMATAFMGYVLPWGQMSFWGATVITNLLSAIPYIGNTLVEWIWGGFSVDKATLTRFFAFHFILPFIITALVMVHLLFLHETGSNNPSGLISDSDKIPFHPYYTIKDILGALLLILILMILVLFSPDLLGDPDNYTPANPLSTPPHIKPEWYFLFAYAILRSIPNKLGGVLALVSSILILLTLPLLHLSKQRSMMFRPLSQLMFWLLVADLLTLTWIGGQPVEYPFIIIGQLASILYFTIILLILPAVSLIENKLLKW</sequence>
<keyword id="KW-0249">Electron transport</keyword>
<keyword id="KW-0349">Heme</keyword>
<keyword id="KW-0408">Iron</keyword>
<keyword id="KW-0472">Membrane</keyword>
<keyword id="KW-0479">Metal-binding</keyword>
<keyword id="KW-0496">Mitochondrion</keyword>
<keyword id="KW-0999">Mitochondrion inner membrane</keyword>
<keyword id="KW-0679">Respiratory chain</keyword>
<keyword id="KW-0812">Transmembrane</keyword>
<keyword id="KW-1133">Transmembrane helix</keyword>
<keyword id="KW-0813">Transport</keyword>
<keyword id="KW-0830">Ubiquinone</keyword>
<protein>
    <recommendedName>
        <fullName>Cytochrome b</fullName>
    </recommendedName>
    <alternativeName>
        <fullName>Complex III subunit 3</fullName>
    </alternativeName>
    <alternativeName>
        <fullName>Complex III subunit III</fullName>
    </alternativeName>
    <alternativeName>
        <fullName>Cytochrome b-c1 complex subunit 3</fullName>
    </alternativeName>
    <alternativeName>
        <fullName>Ubiquinol-cytochrome-c reductase complex cytochrome b subunit</fullName>
    </alternativeName>
</protein>
<accession>Q9TF14</accession>
<gene>
    <name type="primary">MT-CYB</name>
    <name type="synonym">COB</name>
    <name type="synonym">CYTB</name>
    <name type="synonym">MTCYB</name>
</gene>